<reference key="1">
    <citation type="journal article" date="1998" name="Nature">
        <title>The genome sequence of Rickettsia prowazekii and the origin of mitochondria.</title>
        <authorList>
            <person name="Andersson S.G.E."/>
            <person name="Zomorodipour A."/>
            <person name="Andersson J.O."/>
            <person name="Sicheritz-Ponten T."/>
            <person name="Alsmark U.C.M."/>
            <person name="Podowski R.M."/>
            <person name="Naeslund A.K."/>
            <person name="Eriksson A.-S."/>
            <person name="Winkler H.H."/>
            <person name="Kurland C.G."/>
        </authorList>
    </citation>
    <scope>NUCLEOTIDE SEQUENCE [LARGE SCALE GENOMIC DNA]</scope>
    <source>
        <strain>Madrid E</strain>
    </source>
</reference>
<proteinExistence type="inferred from homology"/>
<organism>
    <name type="scientific">Rickettsia prowazekii (strain Madrid E)</name>
    <dbReference type="NCBI Taxonomy" id="272947"/>
    <lineage>
        <taxon>Bacteria</taxon>
        <taxon>Pseudomonadati</taxon>
        <taxon>Pseudomonadota</taxon>
        <taxon>Alphaproteobacteria</taxon>
        <taxon>Rickettsiales</taxon>
        <taxon>Rickettsiaceae</taxon>
        <taxon>Rickettsieae</taxon>
        <taxon>Rickettsia</taxon>
        <taxon>typhus group</taxon>
    </lineage>
</organism>
<evidence type="ECO:0000255" key="1">
    <source>
        <dbReference type="HAMAP-Rule" id="MF_00361"/>
    </source>
</evidence>
<sequence>MNINKIALIYNKNSKHLAIIEEIKKLYNYCKIEEAEVIIIIGGDGELLHNIHRYMHLNIPFYGLNLGSLGFLMNPLDTKKLLQNIYESTVSILHPLLMQVEDTSGQIYKALAINEVSIFRKTNQVAKFRIDVNGVERMSELVADGALVATPAGSSAYNLSAGGPILPLASNMLCLTPICSFRPRRWHGALLLSTDTIKFEILNITKRPVNATADFQEFNNITRVTVKSTKDKYIKLLFNKNHTLEDRIIKEQFGE</sequence>
<dbReference type="EC" id="2.7.1.23" evidence="1"/>
<dbReference type="EMBL" id="AJ235271">
    <property type="protein sequence ID" value="CAA14897.1"/>
    <property type="molecule type" value="Genomic_DNA"/>
</dbReference>
<dbReference type="PIR" id="G71702">
    <property type="entry name" value="G71702"/>
</dbReference>
<dbReference type="RefSeq" id="NP_220821.1">
    <property type="nucleotide sequence ID" value="NC_000963.1"/>
</dbReference>
<dbReference type="RefSeq" id="WP_004597658.1">
    <property type="nucleotide sequence ID" value="NC_000963.1"/>
</dbReference>
<dbReference type="SMR" id="Q9ZDA2"/>
<dbReference type="STRING" id="272947.gene:17555520"/>
<dbReference type="EnsemblBacteria" id="CAA14897">
    <property type="protein sequence ID" value="CAA14897"/>
    <property type="gene ID" value="CAA14897"/>
</dbReference>
<dbReference type="KEGG" id="rpr:RP440"/>
<dbReference type="PATRIC" id="fig|272947.5.peg.453"/>
<dbReference type="eggNOG" id="COG0061">
    <property type="taxonomic scope" value="Bacteria"/>
</dbReference>
<dbReference type="HOGENOM" id="CLU_073319_0_0_5"/>
<dbReference type="OrthoDB" id="9774737at2"/>
<dbReference type="Proteomes" id="UP000002480">
    <property type="component" value="Chromosome"/>
</dbReference>
<dbReference type="GO" id="GO:0005737">
    <property type="term" value="C:cytoplasm"/>
    <property type="evidence" value="ECO:0007669"/>
    <property type="project" value="UniProtKB-SubCell"/>
</dbReference>
<dbReference type="GO" id="GO:0005524">
    <property type="term" value="F:ATP binding"/>
    <property type="evidence" value="ECO:0007669"/>
    <property type="project" value="UniProtKB-KW"/>
</dbReference>
<dbReference type="GO" id="GO:0046872">
    <property type="term" value="F:metal ion binding"/>
    <property type="evidence" value="ECO:0007669"/>
    <property type="project" value="UniProtKB-UniRule"/>
</dbReference>
<dbReference type="GO" id="GO:0051287">
    <property type="term" value="F:NAD binding"/>
    <property type="evidence" value="ECO:0007669"/>
    <property type="project" value="UniProtKB-ARBA"/>
</dbReference>
<dbReference type="GO" id="GO:0003951">
    <property type="term" value="F:NAD+ kinase activity"/>
    <property type="evidence" value="ECO:0007669"/>
    <property type="project" value="UniProtKB-UniRule"/>
</dbReference>
<dbReference type="GO" id="GO:0019674">
    <property type="term" value="P:NAD metabolic process"/>
    <property type="evidence" value="ECO:0007669"/>
    <property type="project" value="InterPro"/>
</dbReference>
<dbReference type="GO" id="GO:0006741">
    <property type="term" value="P:NADP biosynthetic process"/>
    <property type="evidence" value="ECO:0007669"/>
    <property type="project" value="UniProtKB-UniRule"/>
</dbReference>
<dbReference type="Gene3D" id="3.40.50.10330">
    <property type="entry name" value="Probable inorganic polyphosphate/atp-NAD kinase, domain 1"/>
    <property type="match status" value="1"/>
</dbReference>
<dbReference type="Gene3D" id="2.60.200.30">
    <property type="entry name" value="Probable inorganic polyphosphate/atp-NAD kinase, domain 2"/>
    <property type="match status" value="1"/>
</dbReference>
<dbReference type="HAMAP" id="MF_00361">
    <property type="entry name" value="NAD_kinase"/>
    <property type="match status" value="1"/>
</dbReference>
<dbReference type="InterPro" id="IPR017438">
    <property type="entry name" value="ATP-NAD_kinase_N"/>
</dbReference>
<dbReference type="InterPro" id="IPR017437">
    <property type="entry name" value="ATP-NAD_kinase_PpnK-typ_C"/>
</dbReference>
<dbReference type="InterPro" id="IPR016064">
    <property type="entry name" value="NAD/diacylglycerol_kinase_sf"/>
</dbReference>
<dbReference type="InterPro" id="IPR002504">
    <property type="entry name" value="NADK"/>
</dbReference>
<dbReference type="NCBIfam" id="NF003406">
    <property type="entry name" value="PRK04761.1"/>
    <property type="match status" value="1"/>
</dbReference>
<dbReference type="PANTHER" id="PTHR20275">
    <property type="entry name" value="NAD KINASE"/>
    <property type="match status" value="1"/>
</dbReference>
<dbReference type="PANTHER" id="PTHR20275:SF0">
    <property type="entry name" value="NAD KINASE"/>
    <property type="match status" value="1"/>
</dbReference>
<dbReference type="Pfam" id="PF01513">
    <property type="entry name" value="NAD_kinase"/>
    <property type="match status" value="1"/>
</dbReference>
<dbReference type="Pfam" id="PF20143">
    <property type="entry name" value="NAD_kinase_C"/>
    <property type="match status" value="1"/>
</dbReference>
<dbReference type="SUPFAM" id="SSF111331">
    <property type="entry name" value="NAD kinase/diacylglycerol kinase-like"/>
    <property type="match status" value="1"/>
</dbReference>
<protein>
    <recommendedName>
        <fullName evidence="1">NAD kinase</fullName>
        <ecNumber evidence="1">2.7.1.23</ecNumber>
    </recommendedName>
    <alternativeName>
        <fullName evidence="1">ATP-dependent NAD kinase</fullName>
    </alternativeName>
</protein>
<feature type="chain" id="PRO_0000120653" description="NAD kinase">
    <location>
        <begin position="1"/>
        <end position="255"/>
    </location>
</feature>
<feature type="active site" description="Proton acceptor" evidence="1">
    <location>
        <position position="44"/>
    </location>
</feature>
<feature type="binding site" evidence="1">
    <location>
        <begin position="44"/>
        <end position="45"/>
    </location>
    <ligand>
        <name>NAD(+)</name>
        <dbReference type="ChEBI" id="CHEBI:57540"/>
    </ligand>
</feature>
<feature type="binding site" evidence="1">
    <location>
        <position position="49"/>
    </location>
    <ligand>
        <name>NAD(+)</name>
        <dbReference type="ChEBI" id="CHEBI:57540"/>
    </ligand>
</feature>
<feature type="binding site" evidence="1">
    <location>
        <begin position="114"/>
        <end position="115"/>
    </location>
    <ligand>
        <name>NAD(+)</name>
        <dbReference type="ChEBI" id="CHEBI:57540"/>
    </ligand>
</feature>
<feature type="binding site" evidence="1">
    <location>
        <position position="144"/>
    </location>
    <ligand>
        <name>NAD(+)</name>
        <dbReference type="ChEBI" id="CHEBI:57540"/>
    </ligand>
</feature>
<feature type="binding site" evidence="1">
    <location>
        <position position="152"/>
    </location>
    <ligand>
        <name>NAD(+)</name>
        <dbReference type="ChEBI" id="CHEBI:57540"/>
    </ligand>
</feature>
<feature type="binding site" evidence="1">
    <location>
        <begin position="155"/>
        <end position="160"/>
    </location>
    <ligand>
        <name>NAD(+)</name>
        <dbReference type="ChEBI" id="CHEBI:57540"/>
    </ligand>
</feature>
<feature type="binding site" evidence="1">
    <location>
        <position position="216"/>
    </location>
    <ligand>
        <name>NAD(+)</name>
        <dbReference type="ChEBI" id="CHEBI:57540"/>
    </ligand>
</feature>
<accession>Q9ZDA2</accession>
<comment type="function">
    <text evidence="1">Involved in the regulation of the intracellular balance of NAD and NADP, and is a key enzyme in the biosynthesis of NADP. Catalyzes specifically the phosphorylation on 2'-hydroxyl of the adenosine moiety of NAD to yield NADP.</text>
</comment>
<comment type="catalytic activity">
    <reaction evidence="1">
        <text>NAD(+) + ATP = ADP + NADP(+) + H(+)</text>
        <dbReference type="Rhea" id="RHEA:18629"/>
        <dbReference type="ChEBI" id="CHEBI:15378"/>
        <dbReference type="ChEBI" id="CHEBI:30616"/>
        <dbReference type="ChEBI" id="CHEBI:57540"/>
        <dbReference type="ChEBI" id="CHEBI:58349"/>
        <dbReference type="ChEBI" id="CHEBI:456216"/>
        <dbReference type="EC" id="2.7.1.23"/>
    </reaction>
</comment>
<comment type="cofactor">
    <cofactor evidence="1">
        <name>a divalent metal cation</name>
        <dbReference type="ChEBI" id="CHEBI:60240"/>
    </cofactor>
</comment>
<comment type="subcellular location">
    <subcellularLocation>
        <location evidence="1">Cytoplasm</location>
    </subcellularLocation>
</comment>
<comment type="similarity">
    <text evidence="1">Belongs to the NAD kinase family.</text>
</comment>
<keyword id="KW-0067">ATP-binding</keyword>
<keyword id="KW-0963">Cytoplasm</keyword>
<keyword id="KW-0418">Kinase</keyword>
<keyword id="KW-0520">NAD</keyword>
<keyword id="KW-0521">NADP</keyword>
<keyword id="KW-0547">Nucleotide-binding</keyword>
<keyword id="KW-1185">Reference proteome</keyword>
<keyword id="KW-0808">Transferase</keyword>
<name>NADK_RICPR</name>
<gene>
    <name evidence="1" type="primary">nadK</name>
    <name type="ordered locus">RP440</name>
</gene>